<proteinExistence type="predicted"/>
<feature type="chain" id="PRO_0000165237" description="P4 prophage-derived uncharacterized protein t2654">
    <location>
        <begin position="1"/>
        <end position="151"/>
    </location>
</feature>
<feature type="region of interest" description="Disordered" evidence="1">
    <location>
        <begin position="130"/>
        <end position="151"/>
    </location>
</feature>
<keyword id="KW-0244">Early protein</keyword>
<name>YQ54_SALTI</name>
<evidence type="ECO:0000256" key="1">
    <source>
        <dbReference type="SAM" id="MobiDB-lite"/>
    </source>
</evidence>
<organism>
    <name type="scientific">Salmonella typhi</name>
    <dbReference type="NCBI Taxonomy" id="90370"/>
    <lineage>
        <taxon>Bacteria</taxon>
        <taxon>Pseudomonadati</taxon>
        <taxon>Pseudomonadota</taxon>
        <taxon>Gammaproteobacteria</taxon>
        <taxon>Enterobacterales</taxon>
        <taxon>Enterobacteriaceae</taxon>
        <taxon>Salmonella</taxon>
    </lineage>
</organism>
<dbReference type="EMBL" id="AE014613">
    <property type="protein sequence ID" value="AAO70225.1"/>
    <property type="molecule type" value="Genomic_DNA"/>
</dbReference>
<dbReference type="RefSeq" id="WP_000459302.1">
    <property type="nucleotide sequence ID" value="NZ_QAVU01000029.1"/>
</dbReference>
<dbReference type="SMR" id="P68663"/>
<dbReference type="KEGG" id="stt:t2654"/>
<dbReference type="HOGENOM" id="CLU_1964152_0_0_6"/>
<dbReference type="Proteomes" id="UP000002670">
    <property type="component" value="Chromosome"/>
</dbReference>
<reference key="1">
    <citation type="journal article" date="2003" name="J. Bacteriol.">
        <title>Comparative genomics of Salmonella enterica serovar Typhi strains Ty2 and CT18.</title>
        <authorList>
            <person name="Deng W."/>
            <person name="Liou S.-R."/>
            <person name="Plunkett G. III"/>
            <person name="Mayhew G.F."/>
            <person name="Rose D.J."/>
            <person name="Burland V."/>
            <person name="Kodoyianni V."/>
            <person name="Schwartz D.C."/>
            <person name="Blattner F.R."/>
        </authorList>
    </citation>
    <scope>NUCLEOTIDE SEQUENCE [LARGE SCALE GENOMIC DNA]</scope>
    <source>
        <strain>ATCC 700931 / Ty2</strain>
    </source>
</reference>
<protein>
    <recommendedName>
        <fullName>P4 prophage-derived uncharacterized protein t2654</fullName>
    </recommendedName>
</protein>
<gene>
    <name type="ordered locus">t2654</name>
</gene>
<sequence length="151" mass="17726">MFDFPQPGEIYRSAGFPDVAVVGILEDGIPWEMPYRCPDIVWNPYRRKFSILVRILADGRTTDIPLGRFLREFTCDRPDLFKRSPVNRHAVLKEMAGDPELQKWREKYLDIYPQDTVPVSRAAPVAREWREIPRTEPDPETTPDNSYRNYL</sequence>
<accession>P68663</accession>
<accession>P05464</accession>